<protein>
    <recommendedName>
        <fullName evidence="1">Ribulose bisphosphate carboxylase large chain</fullName>
        <shortName evidence="1">RuBisCO large subunit</shortName>
        <ecNumber evidence="1">4.1.1.39</ecNumber>
    </recommendedName>
</protein>
<gene>
    <name evidence="1" type="primary">cbbL</name>
    <name evidence="1" type="synonym">rbcL</name>
    <name type="ordered locus">Tery_4410</name>
</gene>
<keyword id="KW-1283">Bacterial microcompartment</keyword>
<keyword id="KW-0113">Calvin cycle</keyword>
<keyword id="KW-0120">Carbon dioxide fixation</keyword>
<keyword id="KW-1282">Carboxysome</keyword>
<keyword id="KW-1015">Disulfide bond</keyword>
<keyword id="KW-0456">Lyase</keyword>
<keyword id="KW-0460">Magnesium</keyword>
<keyword id="KW-0479">Metal-binding</keyword>
<keyword id="KW-0503">Monooxygenase</keyword>
<keyword id="KW-0560">Oxidoreductase</keyword>
<keyword id="KW-0601">Photorespiration</keyword>
<keyword id="KW-0602">Photosynthesis</keyword>
<accession>Q10WH6</accession>
<feature type="chain" id="PRO_0000299976" description="Ribulose bisphosphate carboxylase large chain">
    <location>
        <begin position="1"/>
        <end position="476"/>
    </location>
</feature>
<feature type="active site" description="Proton acceptor" evidence="1">
    <location>
        <position position="176"/>
    </location>
</feature>
<feature type="active site" description="Proton acceptor" evidence="1">
    <location>
        <position position="295"/>
    </location>
</feature>
<feature type="binding site" description="in homodimeric partner" evidence="1">
    <location>
        <position position="124"/>
    </location>
    <ligand>
        <name>substrate</name>
    </ligand>
</feature>
<feature type="binding site" evidence="1">
    <location>
        <position position="174"/>
    </location>
    <ligand>
        <name>substrate</name>
    </ligand>
</feature>
<feature type="binding site" evidence="1">
    <location>
        <position position="178"/>
    </location>
    <ligand>
        <name>substrate</name>
    </ligand>
</feature>
<feature type="binding site" description="via carbamate group" evidence="1">
    <location>
        <position position="202"/>
    </location>
    <ligand>
        <name>Mg(2+)</name>
        <dbReference type="ChEBI" id="CHEBI:18420"/>
    </ligand>
</feature>
<feature type="binding site" evidence="1">
    <location>
        <position position="204"/>
    </location>
    <ligand>
        <name>Mg(2+)</name>
        <dbReference type="ChEBI" id="CHEBI:18420"/>
    </ligand>
</feature>
<feature type="binding site" evidence="1">
    <location>
        <position position="205"/>
    </location>
    <ligand>
        <name>Mg(2+)</name>
        <dbReference type="ChEBI" id="CHEBI:18420"/>
    </ligand>
</feature>
<feature type="binding site" evidence="1">
    <location>
        <position position="296"/>
    </location>
    <ligand>
        <name>substrate</name>
    </ligand>
</feature>
<feature type="binding site" evidence="1">
    <location>
        <position position="328"/>
    </location>
    <ligand>
        <name>substrate</name>
    </ligand>
</feature>
<feature type="binding site" evidence="1">
    <location>
        <position position="380"/>
    </location>
    <ligand>
        <name>substrate</name>
    </ligand>
</feature>
<feature type="site" description="Transition state stabilizer" evidence="1">
    <location>
        <position position="335"/>
    </location>
</feature>
<feature type="modified residue" description="N6-carboxylysine" evidence="1">
    <location>
        <position position="202"/>
    </location>
</feature>
<feature type="disulfide bond" description="Interchain; in linked form" evidence="1">
    <location>
        <position position="248"/>
    </location>
</feature>
<comment type="function">
    <text evidence="1">RuBisCO catalyzes two reactions: the carboxylation of D-ribulose 1,5-bisphosphate, the primary event in carbon dioxide fixation, as well as the oxidative fragmentation of the pentose substrate in the photorespiration process. Both reactions occur simultaneously and in competition at the same active site.</text>
</comment>
<comment type="catalytic activity">
    <reaction evidence="1">
        <text>2 (2R)-3-phosphoglycerate + 2 H(+) = D-ribulose 1,5-bisphosphate + CO2 + H2O</text>
        <dbReference type="Rhea" id="RHEA:23124"/>
        <dbReference type="ChEBI" id="CHEBI:15377"/>
        <dbReference type="ChEBI" id="CHEBI:15378"/>
        <dbReference type="ChEBI" id="CHEBI:16526"/>
        <dbReference type="ChEBI" id="CHEBI:57870"/>
        <dbReference type="ChEBI" id="CHEBI:58272"/>
        <dbReference type="EC" id="4.1.1.39"/>
    </reaction>
</comment>
<comment type="catalytic activity">
    <reaction evidence="1">
        <text>D-ribulose 1,5-bisphosphate + O2 = 2-phosphoglycolate + (2R)-3-phosphoglycerate + 2 H(+)</text>
        <dbReference type="Rhea" id="RHEA:36631"/>
        <dbReference type="ChEBI" id="CHEBI:15378"/>
        <dbReference type="ChEBI" id="CHEBI:15379"/>
        <dbReference type="ChEBI" id="CHEBI:57870"/>
        <dbReference type="ChEBI" id="CHEBI:58033"/>
        <dbReference type="ChEBI" id="CHEBI:58272"/>
    </reaction>
</comment>
<comment type="cofactor">
    <cofactor evidence="1">
        <name>Mg(2+)</name>
        <dbReference type="ChEBI" id="CHEBI:18420"/>
    </cofactor>
    <text evidence="1">Binds 1 Mg(2+) ion per subunit.</text>
</comment>
<comment type="subunit">
    <text evidence="1">Heterohexadecamer of 8 large chains and 8 small chains; disulfide-linked. The disulfide link is formed within the large subunit homodimers.</text>
</comment>
<comment type="subcellular location">
    <subcellularLocation>
        <location evidence="1">Carboxysome</location>
    </subcellularLocation>
</comment>
<comment type="PTM">
    <text evidence="1">The disulfide bond which can form in the large chain dimeric partners within the hexadecamer appears to be associated with oxidative stress and protein turnover.</text>
</comment>
<comment type="miscellaneous">
    <text evidence="1">The basic functional RuBisCO is composed of a large chain homodimer in a 'head-to-tail' conformation. In form I RuBisCO this homodimer is arranged in a barrel-like tetramer with the small subunits forming a tetrameric 'cap' on each end of the 'barrel'.</text>
</comment>
<comment type="similarity">
    <text evidence="1">Belongs to the RuBisCO large chain family. Type I subfamily.</text>
</comment>
<sequence length="476" mass="53078">MSYAKTQTQSKSGYQAGVKDYKLTYYTPDYIPKDTDLLAAFRMSPQPGVPPEEAGAAVAAESSTGTWTTVWTDLLTDLDRYKGRCYDIESVPGEDNQYICYVAYPLDLFEEGSVTNMLTSIVGNVFGFKALRSLRLEDLRIPVAYLKTFQGPPHGITVERDKLNKYGRPLLGCTIKPKLGLSAKNYGRAVYECLRGGLDFTKDDENINSQPFMRWRDRFLFAQEAIEKAQAETGEIKGHYLNVTAPTCEEMLERADFAKEIGTPIIMHDYLTGGFTANTTLAKWCRRNGVLLHIHRAMHAVIDRQKAHGIHFRVLAKCLRMSGGDHLHSGTVVGKLEGEKGITMGFVDLMREDHVEQDRERGIYFTQDWASMPGVMPVASGGIHVWHMPALVEIFGDDSCLQFGGGTLGHPWGNAPGATANRVALEACIQARNEGRNLFREGGDVIREAAKWSPDLAVACELWKEIKFEFEAMDTL</sequence>
<evidence type="ECO:0000255" key="1">
    <source>
        <dbReference type="HAMAP-Rule" id="MF_01338"/>
    </source>
</evidence>
<organism>
    <name type="scientific">Trichodesmium erythraeum (strain IMS101)</name>
    <dbReference type="NCBI Taxonomy" id="203124"/>
    <lineage>
        <taxon>Bacteria</taxon>
        <taxon>Bacillati</taxon>
        <taxon>Cyanobacteriota</taxon>
        <taxon>Cyanophyceae</taxon>
        <taxon>Oscillatoriophycideae</taxon>
        <taxon>Oscillatoriales</taxon>
        <taxon>Microcoleaceae</taxon>
        <taxon>Trichodesmium</taxon>
    </lineage>
</organism>
<reference key="1">
    <citation type="journal article" date="2015" name="Proc. Natl. Acad. Sci. U.S.A.">
        <title>Trichodesmium genome maintains abundant, widespread noncoding DNA in situ, despite oligotrophic lifestyle.</title>
        <authorList>
            <person name="Walworth N."/>
            <person name="Pfreundt U."/>
            <person name="Nelson W.C."/>
            <person name="Mincer T."/>
            <person name="Heidelberg J.F."/>
            <person name="Fu F."/>
            <person name="Waterbury J.B."/>
            <person name="Glavina del Rio T."/>
            <person name="Goodwin L."/>
            <person name="Kyrpides N.C."/>
            <person name="Land M.L."/>
            <person name="Woyke T."/>
            <person name="Hutchins D.A."/>
            <person name="Hess W.R."/>
            <person name="Webb E.A."/>
        </authorList>
    </citation>
    <scope>NUCLEOTIDE SEQUENCE [LARGE SCALE GENOMIC DNA]</scope>
    <source>
        <strain>IMS101</strain>
    </source>
</reference>
<proteinExistence type="inferred from homology"/>
<name>RBL_TRIEI</name>
<dbReference type="EC" id="4.1.1.39" evidence="1"/>
<dbReference type="EMBL" id="CP000393">
    <property type="protein sequence ID" value="ABG53398.1"/>
    <property type="molecule type" value="Genomic_DNA"/>
</dbReference>
<dbReference type="RefSeq" id="WP_011613724.1">
    <property type="nucleotide sequence ID" value="NC_008312.1"/>
</dbReference>
<dbReference type="SMR" id="Q10WH6"/>
<dbReference type="STRING" id="203124.Tery_4410"/>
<dbReference type="KEGG" id="ter:Tery_4410"/>
<dbReference type="eggNOG" id="COG1850">
    <property type="taxonomic scope" value="Bacteria"/>
</dbReference>
<dbReference type="HOGENOM" id="CLU_031450_2_0_3"/>
<dbReference type="OrthoDB" id="9770811at2"/>
<dbReference type="GO" id="GO:0031470">
    <property type="term" value="C:carboxysome"/>
    <property type="evidence" value="ECO:0007669"/>
    <property type="project" value="UniProtKB-SubCell"/>
</dbReference>
<dbReference type="GO" id="GO:0000287">
    <property type="term" value="F:magnesium ion binding"/>
    <property type="evidence" value="ECO:0007669"/>
    <property type="project" value="UniProtKB-UniRule"/>
</dbReference>
<dbReference type="GO" id="GO:0004497">
    <property type="term" value="F:monooxygenase activity"/>
    <property type="evidence" value="ECO:0007669"/>
    <property type="project" value="UniProtKB-KW"/>
</dbReference>
<dbReference type="GO" id="GO:0016984">
    <property type="term" value="F:ribulose-bisphosphate carboxylase activity"/>
    <property type="evidence" value="ECO:0007669"/>
    <property type="project" value="UniProtKB-UniRule"/>
</dbReference>
<dbReference type="GO" id="GO:0009853">
    <property type="term" value="P:photorespiration"/>
    <property type="evidence" value="ECO:0007669"/>
    <property type="project" value="UniProtKB-KW"/>
</dbReference>
<dbReference type="GO" id="GO:0019253">
    <property type="term" value="P:reductive pentose-phosphate cycle"/>
    <property type="evidence" value="ECO:0007669"/>
    <property type="project" value="UniProtKB-UniRule"/>
</dbReference>
<dbReference type="CDD" id="cd08212">
    <property type="entry name" value="RuBisCO_large_I"/>
    <property type="match status" value="1"/>
</dbReference>
<dbReference type="Gene3D" id="3.20.20.110">
    <property type="entry name" value="Ribulose bisphosphate carboxylase, large subunit, C-terminal domain"/>
    <property type="match status" value="1"/>
</dbReference>
<dbReference type="Gene3D" id="3.30.70.150">
    <property type="entry name" value="RuBisCO large subunit, N-terminal domain"/>
    <property type="match status" value="1"/>
</dbReference>
<dbReference type="HAMAP" id="MF_01338">
    <property type="entry name" value="RuBisCO_L_type1"/>
    <property type="match status" value="1"/>
</dbReference>
<dbReference type="InterPro" id="IPR033966">
    <property type="entry name" value="RuBisCO"/>
</dbReference>
<dbReference type="InterPro" id="IPR020878">
    <property type="entry name" value="RuBisCo_large_chain_AS"/>
</dbReference>
<dbReference type="InterPro" id="IPR000685">
    <property type="entry name" value="RuBisCO_lsu_C"/>
</dbReference>
<dbReference type="InterPro" id="IPR036376">
    <property type="entry name" value="RuBisCO_lsu_C_sf"/>
</dbReference>
<dbReference type="InterPro" id="IPR017443">
    <property type="entry name" value="RuBisCO_lsu_fd_N"/>
</dbReference>
<dbReference type="InterPro" id="IPR036422">
    <property type="entry name" value="RuBisCO_lsu_N_sf"/>
</dbReference>
<dbReference type="InterPro" id="IPR020888">
    <property type="entry name" value="RuBisCO_lsuI"/>
</dbReference>
<dbReference type="NCBIfam" id="NF003252">
    <property type="entry name" value="PRK04208.1"/>
    <property type="match status" value="1"/>
</dbReference>
<dbReference type="PANTHER" id="PTHR42704">
    <property type="entry name" value="RIBULOSE BISPHOSPHATE CARBOXYLASE"/>
    <property type="match status" value="1"/>
</dbReference>
<dbReference type="PANTHER" id="PTHR42704:SF17">
    <property type="entry name" value="RIBULOSE BISPHOSPHATE CARBOXYLASE LARGE CHAIN"/>
    <property type="match status" value="1"/>
</dbReference>
<dbReference type="Pfam" id="PF00016">
    <property type="entry name" value="RuBisCO_large"/>
    <property type="match status" value="1"/>
</dbReference>
<dbReference type="Pfam" id="PF02788">
    <property type="entry name" value="RuBisCO_large_N"/>
    <property type="match status" value="1"/>
</dbReference>
<dbReference type="SFLD" id="SFLDG01052">
    <property type="entry name" value="RuBisCO"/>
    <property type="match status" value="1"/>
</dbReference>
<dbReference type="SFLD" id="SFLDS00014">
    <property type="entry name" value="RuBisCO"/>
    <property type="match status" value="1"/>
</dbReference>
<dbReference type="SFLD" id="SFLDG00301">
    <property type="entry name" value="RuBisCO-like_proteins"/>
    <property type="match status" value="1"/>
</dbReference>
<dbReference type="SUPFAM" id="SSF51649">
    <property type="entry name" value="RuBisCo, C-terminal domain"/>
    <property type="match status" value="1"/>
</dbReference>
<dbReference type="SUPFAM" id="SSF54966">
    <property type="entry name" value="RuBisCO, large subunit, small (N-terminal) domain"/>
    <property type="match status" value="1"/>
</dbReference>
<dbReference type="PROSITE" id="PS00157">
    <property type="entry name" value="RUBISCO_LARGE"/>
    <property type="match status" value="1"/>
</dbReference>